<keyword id="KW-0046">Antibiotic resistance</keyword>
<keyword id="KW-0997">Cell inner membrane</keyword>
<keyword id="KW-1003">Cell membrane</keyword>
<keyword id="KW-0133">Cell shape</keyword>
<keyword id="KW-0961">Cell wall biogenesis/degradation</keyword>
<keyword id="KW-0378">Hydrolase</keyword>
<keyword id="KW-0472">Membrane</keyword>
<keyword id="KW-0573">Peptidoglycan synthesis</keyword>
<keyword id="KW-0812">Transmembrane</keyword>
<keyword id="KW-1133">Transmembrane helix</keyword>
<sequence>MSDMHSLLIAAILGVVEGLTEFLPVSSTGHMIIVGHLLGFEGDTAKTFEVVIQLGSILAVVVMFWRRLFGLIGIHFGRPLQHEGESKGRLTLIHILLGMIPAVVLGLLFHDTIKSLFNPINVMYALVVGGLLLIAAECLKPKEPRAPGLDDMTYRQAFMIGCFQCLALWPGFSRSGATISGGMLMGVSRYAASEFSFLLAVPMMMGATALDLYKSWGFLTTGDIPMFAVGFITAFVVALIAIKTFLQLIKRISFIPFAIYRFIVAAAVYVVFF</sequence>
<dbReference type="EC" id="3.6.1.27" evidence="1"/>
<dbReference type="EMBL" id="CP000247">
    <property type="protein sequence ID" value="ABG71130.1"/>
    <property type="molecule type" value="Genomic_DNA"/>
</dbReference>
<dbReference type="SMR" id="Q0TD49"/>
<dbReference type="KEGG" id="ecp:ECP_3147"/>
<dbReference type="HOGENOM" id="CLU_060296_2_0_6"/>
<dbReference type="Proteomes" id="UP000009182">
    <property type="component" value="Chromosome"/>
</dbReference>
<dbReference type="GO" id="GO:0005886">
    <property type="term" value="C:plasma membrane"/>
    <property type="evidence" value="ECO:0007669"/>
    <property type="project" value="UniProtKB-SubCell"/>
</dbReference>
<dbReference type="GO" id="GO:0050380">
    <property type="term" value="F:undecaprenyl-diphosphatase activity"/>
    <property type="evidence" value="ECO:0007669"/>
    <property type="project" value="UniProtKB-UniRule"/>
</dbReference>
<dbReference type="GO" id="GO:0071555">
    <property type="term" value="P:cell wall organization"/>
    <property type="evidence" value="ECO:0007669"/>
    <property type="project" value="UniProtKB-KW"/>
</dbReference>
<dbReference type="GO" id="GO:0009252">
    <property type="term" value="P:peptidoglycan biosynthetic process"/>
    <property type="evidence" value="ECO:0007669"/>
    <property type="project" value="UniProtKB-KW"/>
</dbReference>
<dbReference type="GO" id="GO:0008360">
    <property type="term" value="P:regulation of cell shape"/>
    <property type="evidence" value="ECO:0007669"/>
    <property type="project" value="UniProtKB-KW"/>
</dbReference>
<dbReference type="GO" id="GO:0046677">
    <property type="term" value="P:response to antibiotic"/>
    <property type="evidence" value="ECO:0007669"/>
    <property type="project" value="UniProtKB-UniRule"/>
</dbReference>
<dbReference type="HAMAP" id="MF_01006">
    <property type="entry name" value="Undec_diphosphatase"/>
    <property type="match status" value="1"/>
</dbReference>
<dbReference type="InterPro" id="IPR003824">
    <property type="entry name" value="UppP"/>
</dbReference>
<dbReference type="NCBIfam" id="NF001388">
    <property type="entry name" value="PRK00281.1-1"/>
    <property type="match status" value="1"/>
</dbReference>
<dbReference type="NCBIfam" id="NF001389">
    <property type="entry name" value="PRK00281.1-2"/>
    <property type="match status" value="1"/>
</dbReference>
<dbReference type="NCBIfam" id="NF001390">
    <property type="entry name" value="PRK00281.1-4"/>
    <property type="match status" value="1"/>
</dbReference>
<dbReference type="NCBIfam" id="TIGR00753">
    <property type="entry name" value="undec_PP_bacA"/>
    <property type="match status" value="1"/>
</dbReference>
<dbReference type="PANTHER" id="PTHR30622">
    <property type="entry name" value="UNDECAPRENYL-DIPHOSPHATASE"/>
    <property type="match status" value="1"/>
</dbReference>
<dbReference type="PANTHER" id="PTHR30622:SF3">
    <property type="entry name" value="UNDECAPRENYL-DIPHOSPHATASE"/>
    <property type="match status" value="1"/>
</dbReference>
<dbReference type="Pfam" id="PF02673">
    <property type="entry name" value="BacA"/>
    <property type="match status" value="1"/>
</dbReference>
<comment type="function">
    <text evidence="1">Catalyzes the dephosphorylation of undecaprenyl diphosphate (UPP). Confers resistance to bacitracin.</text>
</comment>
<comment type="catalytic activity">
    <reaction evidence="1">
        <text>di-trans,octa-cis-undecaprenyl diphosphate + H2O = di-trans,octa-cis-undecaprenyl phosphate + phosphate + H(+)</text>
        <dbReference type="Rhea" id="RHEA:28094"/>
        <dbReference type="ChEBI" id="CHEBI:15377"/>
        <dbReference type="ChEBI" id="CHEBI:15378"/>
        <dbReference type="ChEBI" id="CHEBI:43474"/>
        <dbReference type="ChEBI" id="CHEBI:58405"/>
        <dbReference type="ChEBI" id="CHEBI:60392"/>
        <dbReference type="EC" id="3.6.1.27"/>
    </reaction>
</comment>
<comment type="subcellular location">
    <subcellularLocation>
        <location evidence="1">Cell inner membrane</location>
        <topology evidence="1">Multi-pass membrane protein</topology>
    </subcellularLocation>
</comment>
<comment type="miscellaneous">
    <text>Bacitracin is thought to be involved in the inhibition of peptidoglycan synthesis by sequestering undecaprenyl diphosphate, thereby reducing the pool of lipid carrier available.</text>
</comment>
<comment type="similarity">
    <text evidence="1">Belongs to the UppP family.</text>
</comment>
<gene>
    <name evidence="1" type="primary">uppP</name>
    <name type="ordered locus">ECP_3147</name>
</gene>
<protein>
    <recommendedName>
        <fullName evidence="1">Undecaprenyl-diphosphatase</fullName>
        <ecNumber evidence="1">3.6.1.27</ecNumber>
    </recommendedName>
    <alternativeName>
        <fullName evidence="1">Bacitracin resistance protein</fullName>
    </alternativeName>
    <alternativeName>
        <fullName evidence="1">Undecaprenyl pyrophosphate phosphatase</fullName>
    </alternativeName>
</protein>
<evidence type="ECO:0000255" key="1">
    <source>
        <dbReference type="HAMAP-Rule" id="MF_01006"/>
    </source>
</evidence>
<feature type="chain" id="PRO_0000290708" description="Undecaprenyl-diphosphatase">
    <location>
        <begin position="1"/>
        <end position="273"/>
    </location>
</feature>
<feature type="transmembrane region" description="Helical" evidence="1">
    <location>
        <begin position="6"/>
        <end position="26"/>
    </location>
</feature>
<feature type="transmembrane region" description="Helical" evidence="1">
    <location>
        <begin position="45"/>
        <end position="65"/>
    </location>
</feature>
<feature type="transmembrane region" description="Helical" evidence="1">
    <location>
        <begin position="90"/>
        <end position="110"/>
    </location>
</feature>
<feature type="transmembrane region" description="Helical" evidence="1">
    <location>
        <begin position="116"/>
        <end position="136"/>
    </location>
</feature>
<feature type="transmembrane region" description="Helical" evidence="1">
    <location>
        <begin position="190"/>
        <end position="210"/>
    </location>
</feature>
<feature type="transmembrane region" description="Helical" evidence="1">
    <location>
        <begin position="222"/>
        <end position="242"/>
    </location>
</feature>
<feature type="transmembrane region" description="Helical" evidence="1">
    <location>
        <begin position="252"/>
        <end position="272"/>
    </location>
</feature>
<reference key="1">
    <citation type="journal article" date="2006" name="Mol. Microbiol.">
        <title>Role of pathogenicity island-associated integrases in the genome plasticity of uropathogenic Escherichia coli strain 536.</title>
        <authorList>
            <person name="Hochhut B."/>
            <person name="Wilde C."/>
            <person name="Balling G."/>
            <person name="Middendorf B."/>
            <person name="Dobrindt U."/>
            <person name="Brzuszkiewicz E."/>
            <person name="Gottschalk G."/>
            <person name="Carniel E."/>
            <person name="Hacker J."/>
        </authorList>
    </citation>
    <scope>NUCLEOTIDE SEQUENCE [LARGE SCALE GENOMIC DNA]</scope>
    <source>
        <strain>536 / UPEC</strain>
    </source>
</reference>
<name>UPPP_ECOL5</name>
<accession>Q0TD49</accession>
<proteinExistence type="inferred from homology"/>
<organism>
    <name type="scientific">Escherichia coli O6:K15:H31 (strain 536 / UPEC)</name>
    <dbReference type="NCBI Taxonomy" id="362663"/>
    <lineage>
        <taxon>Bacteria</taxon>
        <taxon>Pseudomonadati</taxon>
        <taxon>Pseudomonadota</taxon>
        <taxon>Gammaproteobacteria</taxon>
        <taxon>Enterobacterales</taxon>
        <taxon>Enterobacteriaceae</taxon>
        <taxon>Escherichia</taxon>
    </lineage>
</organism>